<keyword id="KW-0963">Cytoplasm</keyword>
<keyword id="KW-0378">Hydrolase</keyword>
<comment type="catalytic activity">
    <reaction evidence="1">
        <text>urea + 2 H2O + H(+) = hydrogencarbonate + 2 NH4(+)</text>
        <dbReference type="Rhea" id="RHEA:20557"/>
        <dbReference type="ChEBI" id="CHEBI:15377"/>
        <dbReference type="ChEBI" id="CHEBI:15378"/>
        <dbReference type="ChEBI" id="CHEBI:16199"/>
        <dbReference type="ChEBI" id="CHEBI:17544"/>
        <dbReference type="ChEBI" id="CHEBI:28938"/>
        <dbReference type="EC" id="3.5.1.5"/>
    </reaction>
</comment>
<comment type="pathway">
    <text evidence="1">Nitrogen metabolism; urea degradation; CO(2) and NH(3) from urea (urease route): step 1/1.</text>
</comment>
<comment type="subunit">
    <text evidence="1">Heterotrimer of UreA (gamma), UreB (beta) and UreC (alpha) subunits. Three heterotrimers associate to form the active enzyme.</text>
</comment>
<comment type="subcellular location">
    <subcellularLocation>
        <location evidence="1">Cytoplasm</location>
    </subcellularLocation>
</comment>
<comment type="similarity">
    <text evidence="1">Belongs to the urease gamma subunit family.</text>
</comment>
<gene>
    <name evidence="1" type="primary">ureA</name>
</gene>
<organism>
    <name type="scientific">Streptococcus thermophilus</name>
    <dbReference type="NCBI Taxonomy" id="1308"/>
    <lineage>
        <taxon>Bacteria</taxon>
        <taxon>Bacillati</taxon>
        <taxon>Bacillota</taxon>
        <taxon>Bacilli</taxon>
        <taxon>Lactobacillales</taxon>
        <taxon>Streptococcaceae</taxon>
        <taxon>Streptococcus</taxon>
    </lineage>
</organism>
<dbReference type="EC" id="3.5.1.5" evidence="1"/>
<dbReference type="EMBL" id="AJ544512">
    <property type="protein sequence ID" value="CAD67481.1"/>
    <property type="molecule type" value="Genomic_DNA"/>
</dbReference>
<dbReference type="EMBL" id="AF362908">
    <property type="protein sequence ID" value="AAO37370.1"/>
    <property type="molecule type" value="Genomic_DNA"/>
</dbReference>
<dbReference type="RefSeq" id="WP_002886558.1">
    <property type="nucleotide sequence ID" value="NZ_WMLD01000009.1"/>
</dbReference>
<dbReference type="SMR" id="Q83U21"/>
<dbReference type="eggNOG" id="COG0831">
    <property type="taxonomic scope" value="Bacteria"/>
</dbReference>
<dbReference type="OMA" id="MQLTPHE"/>
<dbReference type="OrthoDB" id="9793527at2"/>
<dbReference type="UniPathway" id="UPA00258">
    <property type="reaction ID" value="UER00370"/>
</dbReference>
<dbReference type="GO" id="GO:0005737">
    <property type="term" value="C:cytoplasm"/>
    <property type="evidence" value="ECO:0007669"/>
    <property type="project" value="UniProtKB-SubCell"/>
</dbReference>
<dbReference type="GO" id="GO:0016151">
    <property type="term" value="F:nickel cation binding"/>
    <property type="evidence" value="ECO:0007669"/>
    <property type="project" value="InterPro"/>
</dbReference>
<dbReference type="GO" id="GO:0009039">
    <property type="term" value="F:urease activity"/>
    <property type="evidence" value="ECO:0007669"/>
    <property type="project" value="UniProtKB-UniRule"/>
</dbReference>
<dbReference type="GO" id="GO:0043419">
    <property type="term" value="P:urea catabolic process"/>
    <property type="evidence" value="ECO:0007669"/>
    <property type="project" value="UniProtKB-UniRule"/>
</dbReference>
<dbReference type="CDD" id="cd00390">
    <property type="entry name" value="Urease_gamma"/>
    <property type="match status" value="1"/>
</dbReference>
<dbReference type="Gene3D" id="3.30.280.10">
    <property type="entry name" value="Urease, gamma-like subunit"/>
    <property type="match status" value="1"/>
</dbReference>
<dbReference type="HAMAP" id="MF_00739">
    <property type="entry name" value="Urease_gamma"/>
    <property type="match status" value="1"/>
</dbReference>
<dbReference type="InterPro" id="IPR012010">
    <property type="entry name" value="Urease_gamma"/>
</dbReference>
<dbReference type="InterPro" id="IPR002026">
    <property type="entry name" value="Urease_gamma/gamma-beta_su"/>
</dbReference>
<dbReference type="InterPro" id="IPR036463">
    <property type="entry name" value="Urease_gamma_sf"/>
</dbReference>
<dbReference type="InterPro" id="IPR050069">
    <property type="entry name" value="Urease_subunit"/>
</dbReference>
<dbReference type="NCBIfam" id="NF009712">
    <property type="entry name" value="PRK13241.1"/>
    <property type="match status" value="1"/>
</dbReference>
<dbReference type="NCBIfam" id="TIGR00193">
    <property type="entry name" value="urease_gam"/>
    <property type="match status" value="1"/>
</dbReference>
<dbReference type="PANTHER" id="PTHR33569">
    <property type="entry name" value="UREASE"/>
    <property type="match status" value="1"/>
</dbReference>
<dbReference type="PANTHER" id="PTHR33569:SF1">
    <property type="entry name" value="UREASE"/>
    <property type="match status" value="1"/>
</dbReference>
<dbReference type="Pfam" id="PF00547">
    <property type="entry name" value="Urease_gamma"/>
    <property type="match status" value="1"/>
</dbReference>
<dbReference type="PIRSF" id="PIRSF001223">
    <property type="entry name" value="Urease_gamma"/>
    <property type="match status" value="1"/>
</dbReference>
<dbReference type="SUPFAM" id="SSF54111">
    <property type="entry name" value="Urease, gamma-subunit"/>
    <property type="match status" value="1"/>
</dbReference>
<accession>Q83U21</accession>
<proteinExistence type="inferred from homology"/>
<sequence>MQLTMREQEKMMISLAAMIAQRRKDKGIKLNHPEAVALITDYVLEGAREGKTVAQLMDEARNLLTREDVMEGIAEMIPMIQVEATFTDSTKLVTVHDPIQ</sequence>
<evidence type="ECO:0000255" key="1">
    <source>
        <dbReference type="HAMAP-Rule" id="MF_00739"/>
    </source>
</evidence>
<feature type="chain" id="PRO_0000098051" description="Urease subunit gamma">
    <location>
        <begin position="1"/>
        <end position="100"/>
    </location>
</feature>
<protein>
    <recommendedName>
        <fullName evidence="1">Urease subunit gamma</fullName>
        <ecNumber evidence="1">3.5.1.5</ecNumber>
    </recommendedName>
    <alternativeName>
        <fullName evidence="1">Urea amidohydrolase subunit gamma</fullName>
    </alternativeName>
</protein>
<reference key="1">
    <citation type="journal article" date="2004" name="J. Appl. Microbiol.">
        <title>Characterization of urease genes cluster of Streptococcus thermophilus.</title>
        <authorList>
            <person name="Mora D."/>
            <person name="Maguin E."/>
            <person name="Masiero M."/>
            <person name="Parini C."/>
            <person name="Ricci G."/>
            <person name="Manachini P.L."/>
            <person name="Daffonchio D."/>
        </authorList>
    </citation>
    <scope>NUCLEOTIDE SEQUENCE [GENOMIC DNA]</scope>
    <source>
        <strain>ATCC 19258 / DSM 20617 / LMG 6896 / NCDO 573 / NCIMB 8510</strain>
    </source>
</reference>
<reference key="2">
    <citation type="submission" date="2001-03" db="EMBL/GenBank/DDBJ databases">
        <title>Characterization of Streptococcus thermophilus urease operon.</title>
        <authorList>
            <person name="Anba-Mondoloni J."/>
            <person name="Renault P."/>
            <person name="Ehrlich S.D."/>
        </authorList>
    </citation>
    <scope>NUCLEOTIDE SEQUENCE [GENOMIC DNA]</scope>
</reference>
<name>URE3_STRTR</name>